<sequence length="537" mass="63471">MYSNENYAEEGYEDYGYDAGMIDDGYDRSYYPMHEDVKKFLVYFSSVIKNGVVYEIQNLYENTFPKLSEQHFEKKAWPSEEEVAHLVDNDSLFMILYKELYYRHLHARIQKGPSLEQRLNSFYNYCNFFNHILPSKEPVQLELPDIWLWELIDEFVYQFQNFAQYRARLSDKSEEEMDMLLNNNSKVWNILCILNVLHSLVSMSKIKDQLEAAAAGRDPEEVAGEFGRHSFYKMLGYFSLVGLLRVHSLLGDYHQAIKVLEPIEIHKKSQYSHIPACQISTSYYVGFAYMMMRRYSDAIRTFSSILLYIQRTKQLYSARSYQNDQINKQTDQMYHLLAICLVLHPQCIDESIQQVLREKNYHDNMYKMQCGDLETFRNFFVFACPKFVSPVPPPSDAPIDDYVKEALEHQTNVFMDEVRQQQELPTIRSYLKLYTTLPLLKLASFMDHIPQDEIGEQKIENLLTHLLCFKHKMKNIVWTKGASGLEGKFQSGSELDFYIDKDMIHIADTKVSHRYGDFFIRKIMKFEDLNRRLHNLK</sequence>
<organism>
    <name type="scientific">Aedes aegypti</name>
    <name type="common">Yellowfever mosquito</name>
    <name type="synonym">Culex aegypti</name>
    <dbReference type="NCBI Taxonomy" id="7159"/>
    <lineage>
        <taxon>Eukaryota</taxon>
        <taxon>Metazoa</taxon>
        <taxon>Ecdysozoa</taxon>
        <taxon>Arthropoda</taxon>
        <taxon>Hexapoda</taxon>
        <taxon>Insecta</taxon>
        <taxon>Pterygota</taxon>
        <taxon>Neoptera</taxon>
        <taxon>Endopterygota</taxon>
        <taxon>Diptera</taxon>
        <taxon>Nematocera</taxon>
        <taxon>Culicoidea</taxon>
        <taxon>Culicidae</taxon>
        <taxon>Culicinae</taxon>
        <taxon>Aedini</taxon>
        <taxon>Aedes</taxon>
        <taxon>Stegomyia</taxon>
    </lineage>
</organism>
<reference key="1">
    <citation type="journal article" date="2007" name="Science">
        <title>Genome sequence of Aedes aegypti, a major arbovirus vector.</title>
        <authorList>
            <person name="Nene V."/>
            <person name="Wortman J.R."/>
            <person name="Lawson D."/>
            <person name="Haas B.J."/>
            <person name="Kodira C.D."/>
            <person name="Tu Z.J."/>
            <person name="Loftus B.J."/>
            <person name="Xi Z."/>
            <person name="Megy K."/>
            <person name="Grabherr M."/>
            <person name="Ren Q."/>
            <person name="Zdobnov E.M."/>
            <person name="Lobo N.F."/>
            <person name="Campbell K.S."/>
            <person name="Brown S.E."/>
            <person name="Bonaldo M.F."/>
            <person name="Zhu J."/>
            <person name="Sinkins S.P."/>
            <person name="Hogenkamp D.G."/>
            <person name="Amedeo P."/>
            <person name="Arensburger P."/>
            <person name="Atkinson P.W."/>
            <person name="Bidwell S.L."/>
            <person name="Biedler J."/>
            <person name="Birney E."/>
            <person name="Bruggner R.V."/>
            <person name="Costas J."/>
            <person name="Coy M.R."/>
            <person name="Crabtree J."/>
            <person name="Crawford M."/>
            <person name="DeBruyn B."/>
            <person name="DeCaprio D."/>
            <person name="Eiglmeier K."/>
            <person name="Eisenstadt E."/>
            <person name="El-Dorry H."/>
            <person name="Gelbart W.M."/>
            <person name="Gomes S.L."/>
            <person name="Hammond M."/>
            <person name="Hannick L.I."/>
            <person name="Hogan J.R."/>
            <person name="Holmes M.H."/>
            <person name="Jaffe D."/>
            <person name="Johnston S.J."/>
            <person name="Kennedy R.C."/>
            <person name="Koo H."/>
            <person name="Kravitz S."/>
            <person name="Kriventseva E.V."/>
            <person name="Kulp D."/>
            <person name="Labutti K."/>
            <person name="Lee E."/>
            <person name="Li S."/>
            <person name="Lovin D.D."/>
            <person name="Mao C."/>
            <person name="Mauceli E."/>
            <person name="Menck C.F."/>
            <person name="Miller J.R."/>
            <person name="Montgomery P."/>
            <person name="Mori A."/>
            <person name="Nascimento A.L."/>
            <person name="Naveira H.F."/>
            <person name="Nusbaum C."/>
            <person name="O'Leary S.B."/>
            <person name="Orvis J."/>
            <person name="Pertea M."/>
            <person name="Quesneville H."/>
            <person name="Reidenbach K.R."/>
            <person name="Rogers Y.-H.C."/>
            <person name="Roth C.W."/>
            <person name="Schneider J.R."/>
            <person name="Schatz M."/>
            <person name="Shumway M."/>
            <person name="Stanke M."/>
            <person name="Stinson E.O."/>
            <person name="Tubio J.M.C."/>
            <person name="Vanzee J.P."/>
            <person name="Verjovski-Almeida S."/>
            <person name="Werner D."/>
            <person name="White O.R."/>
            <person name="Wyder S."/>
            <person name="Zeng Q."/>
            <person name="Zhao Q."/>
            <person name="Zhao Y."/>
            <person name="Hill C.A."/>
            <person name="Raikhel A.S."/>
            <person name="Soares M.B."/>
            <person name="Knudson D.L."/>
            <person name="Lee N.H."/>
            <person name="Galagan J."/>
            <person name="Salzberg S.L."/>
            <person name="Paulsen I.T."/>
            <person name="Dimopoulos G."/>
            <person name="Collins F.H."/>
            <person name="Bruce B."/>
            <person name="Fraser-Liggett C.M."/>
            <person name="Severson D.W."/>
        </authorList>
    </citation>
    <scope>NUCLEOTIDE SEQUENCE [LARGE SCALE GENOMIC DNA]</scope>
    <source>
        <strain>LVPib12</strain>
    </source>
</reference>
<name>EIF3L_AEDAE</name>
<accession>Q16FL6</accession>
<dbReference type="EMBL" id="CH478416">
    <property type="protein sequence ID" value="EAT33027.1"/>
    <property type="molecule type" value="Genomic_DNA"/>
</dbReference>
<dbReference type="EMBL" id="CH477597">
    <property type="protein sequence ID" value="EAT38507.1"/>
    <property type="molecule type" value="Genomic_DNA"/>
</dbReference>
<dbReference type="RefSeq" id="XP_001649423.1">
    <property type="nucleotide sequence ID" value="XM_001649373.1"/>
</dbReference>
<dbReference type="SMR" id="Q16FL6"/>
<dbReference type="FunCoup" id="Q16FL6">
    <property type="interactions" value="1904"/>
</dbReference>
<dbReference type="STRING" id="7159.Q16FL6"/>
<dbReference type="PaxDb" id="7159-AAEL009617-PA"/>
<dbReference type="EnsemblMetazoa" id="AAEL014715-RB">
    <property type="protein sequence ID" value="AAEL014715-PB"/>
    <property type="gene ID" value="AAEL014715"/>
</dbReference>
<dbReference type="GeneID" id="5572195"/>
<dbReference type="KEGG" id="aag:5572195"/>
<dbReference type="CTD" id="51386"/>
<dbReference type="VEuPathDB" id="VectorBase:AAEL014715"/>
<dbReference type="eggNOG" id="KOG3677">
    <property type="taxonomic scope" value="Eukaryota"/>
</dbReference>
<dbReference type="HOGENOM" id="CLU_029210_0_1_1"/>
<dbReference type="InParanoid" id="Q16FL6"/>
<dbReference type="OMA" id="AGWFIRN"/>
<dbReference type="OrthoDB" id="15082at2759"/>
<dbReference type="PhylomeDB" id="Q16FL6"/>
<dbReference type="Proteomes" id="UP000008820">
    <property type="component" value="Chromosome 2"/>
</dbReference>
<dbReference type="Proteomes" id="UP000682892">
    <property type="component" value="Unassembled WGS sequence"/>
</dbReference>
<dbReference type="GO" id="GO:0016282">
    <property type="term" value="C:eukaryotic 43S preinitiation complex"/>
    <property type="evidence" value="ECO:0007669"/>
    <property type="project" value="UniProtKB-UniRule"/>
</dbReference>
<dbReference type="GO" id="GO:0033290">
    <property type="term" value="C:eukaryotic 48S preinitiation complex"/>
    <property type="evidence" value="ECO:0007669"/>
    <property type="project" value="UniProtKB-UniRule"/>
</dbReference>
<dbReference type="GO" id="GO:0005852">
    <property type="term" value="C:eukaryotic translation initiation factor 3 complex"/>
    <property type="evidence" value="ECO:0007669"/>
    <property type="project" value="UniProtKB-UniRule"/>
</dbReference>
<dbReference type="GO" id="GO:0003743">
    <property type="term" value="F:translation initiation factor activity"/>
    <property type="evidence" value="ECO:0007669"/>
    <property type="project" value="UniProtKB-UniRule"/>
</dbReference>
<dbReference type="GO" id="GO:0001732">
    <property type="term" value="P:formation of cytoplasmic translation initiation complex"/>
    <property type="evidence" value="ECO:0007669"/>
    <property type="project" value="UniProtKB-UniRule"/>
</dbReference>
<dbReference type="HAMAP" id="MF_03011">
    <property type="entry name" value="eIF3l"/>
    <property type="match status" value="1"/>
</dbReference>
<dbReference type="InterPro" id="IPR019382">
    <property type="entry name" value="eIF3l"/>
</dbReference>
<dbReference type="InterPro" id="IPR000717">
    <property type="entry name" value="PCI_dom"/>
</dbReference>
<dbReference type="InterPro" id="IPR011990">
    <property type="entry name" value="TPR-like_helical_dom_sf"/>
</dbReference>
<dbReference type="PANTHER" id="PTHR13242">
    <property type="entry name" value="EUKARYOTIC TRANSLATION INITIATION FACTOR 3"/>
    <property type="match status" value="1"/>
</dbReference>
<dbReference type="PANTHER" id="PTHR13242:SF0">
    <property type="entry name" value="EUKARYOTIC TRANSLATION INITIATION FACTOR 3 SUBUNIT L"/>
    <property type="match status" value="1"/>
</dbReference>
<dbReference type="Pfam" id="PF10255">
    <property type="entry name" value="Paf67"/>
    <property type="match status" value="1"/>
</dbReference>
<dbReference type="SUPFAM" id="SSF48452">
    <property type="entry name" value="TPR-like"/>
    <property type="match status" value="1"/>
</dbReference>
<dbReference type="PROSITE" id="PS50250">
    <property type="entry name" value="PCI"/>
    <property type="match status" value="1"/>
</dbReference>
<protein>
    <recommendedName>
        <fullName evidence="1">Eukaryotic translation initiation factor 3 subunit L</fullName>
        <shortName evidence="1">eIF3l</shortName>
    </recommendedName>
</protein>
<comment type="function">
    <text evidence="1">Component of the eukaryotic translation initiation factor 3 (eIF-3) complex, which is involved in protein synthesis of a specialized repertoire of mRNAs and, together with other initiation factors, stimulates binding of mRNA and methionyl-tRNAi to the 40S ribosome. The eIF-3 complex specifically targets and initiates translation of a subset of mRNAs involved in cell proliferation.</text>
</comment>
<comment type="subunit">
    <text evidence="1">Component of the eukaryotic translation initiation factor 3 (eIF-3) complex.</text>
</comment>
<comment type="subcellular location">
    <subcellularLocation>
        <location evidence="1">Cytoplasm</location>
    </subcellularLocation>
</comment>
<comment type="similarity">
    <text evidence="1">Belongs to the eIF-3 subunit L family.</text>
</comment>
<feature type="chain" id="PRO_0000364239" description="Eukaryotic translation initiation factor 3 subunit L">
    <location>
        <begin position="1"/>
        <end position="537"/>
    </location>
</feature>
<feature type="domain" description="PCI" evidence="2">
    <location>
        <begin position="301"/>
        <end position="513"/>
    </location>
</feature>
<proteinExistence type="inferred from homology"/>
<gene>
    <name type="ORF">AAEL009617</name>
    <name type="ORF">AAEL014715</name>
</gene>
<evidence type="ECO:0000255" key="1">
    <source>
        <dbReference type="HAMAP-Rule" id="MF_03011"/>
    </source>
</evidence>
<evidence type="ECO:0000255" key="2">
    <source>
        <dbReference type="PROSITE-ProRule" id="PRU01185"/>
    </source>
</evidence>
<keyword id="KW-0963">Cytoplasm</keyword>
<keyword id="KW-0396">Initiation factor</keyword>
<keyword id="KW-0648">Protein biosynthesis</keyword>
<keyword id="KW-1185">Reference proteome</keyword>